<keyword id="KW-0963">Cytoplasm</keyword>
<keyword id="KW-0342">GTP-binding</keyword>
<keyword id="KW-0436">Ligase</keyword>
<keyword id="KW-0460">Magnesium</keyword>
<keyword id="KW-0479">Metal-binding</keyword>
<keyword id="KW-0547">Nucleotide-binding</keyword>
<keyword id="KW-0658">Purine biosynthesis</keyword>
<keyword id="KW-1185">Reference proteome</keyword>
<gene>
    <name evidence="1" type="primary">purA</name>
    <name type="ordered locus">Bd1460</name>
</gene>
<reference key="1">
    <citation type="journal article" date="2004" name="Science">
        <title>A predator unmasked: life cycle of Bdellovibrio bacteriovorus from a genomic perspective.</title>
        <authorList>
            <person name="Rendulic S."/>
            <person name="Jagtap P."/>
            <person name="Rosinus A."/>
            <person name="Eppinger M."/>
            <person name="Baar C."/>
            <person name="Lanz C."/>
            <person name="Keller H."/>
            <person name="Lambert C."/>
            <person name="Evans K.J."/>
            <person name="Goesmann A."/>
            <person name="Meyer F."/>
            <person name="Sockett R.E."/>
            <person name="Schuster S.C."/>
        </authorList>
    </citation>
    <scope>NUCLEOTIDE SEQUENCE [LARGE SCALE GENOMIC DNA]</scope>
    <source>
        <strain>ATCC 15356 / DSM 50701 / NCIMB 9529 / HD100</strain>
    </source>
</reference>
<protein>
    <recommendedName>
        <fullName evidence="1">Adenylosuccinate synthetase</fullName>
        <shortName evidence="1">AMPSase</shortName>
        <shortName evidence="1">AdSS</shortName>
        <ecNumber evidence="1">6.3.4.4</ecNumber>
    </recommendedName>
    <alternativeName>
        <fullName evidence="1">IMP--aspartate ligase</fullName>
    </alternativeName>
</protein>
<sequence>MSGVVVVGAQWGDEGKGKLIDVFAEKADMVVRYQGGANAGHTLVVNGQKTVLHLVPSGILRPETTCVIASGVVIDVFSIRDEIKKLKDTGFLQNPKQLLISDTATLILPYHKALDAAREAALSDGKIGTTGKGIGPAYEDRASRRAILFGDLFDKDNLKKKLELALTEKNFMLENYYKGSTFKADDLIKDLLAVAEELAPYRTKDTSLFISKSLKSGKRVLFEGAQGTMLDILHGTYPFVTSSSTLASNACASAGIGPASVQKVIGVFKAYTTRVGSGPFPTELNDEIGKKIQADGHEFGSTTGRSRRCGWLDLVALKYAIRVNGITNLAMMKLDVLTGHDRIGVCTAYKLNGEIITDLPTSPYELEKVEPVIEWIPGWTQDLTKVKTLSDLPRPTTNYIDYLGSQLGTPIDVISVGPGREQTLWVKPLFNN</sequence>
<feature type="chain" id="PRO_0000224259" description="Adenylosuccinate synthetase">
    <location>
        <begin position="1"/>
        <end position="432"/>
    </location>
</feature>
<feature type="active site" description="Proton acceptor" evidence="1">
    <location>
        <position position="13"/>
    </location>
</feature>
<feature type="active site" description="Proton donor" evidence="1">
    <location>
        <position position="41"/>
    </location>
</feature>
<feature type="binding site" evidence="1">
    <location>
        <begin position="12"/>
        <end position="18"/>
    </location>
    <ligand>
        <name>GTP</name>
        <dbReference type="ChEBI" id="CHEBI:37565"/>
    </ligand>
</feature>
<feature type="binding site" description="in other chain" evidence="1">
    <location>
        <begin position="13"/>
        <end position="16"/>
    </location>
    <ligand>
        <name>IMP</name>
        <dbReference type="ChEBI" id="CHEBI:58053"/>
        <note>ligand shared between dimeric partners</note>
    </ligand>
</feature>
<feature type="binding site" evidence="1">
    <location>
        <position position="13"/>
    </location>
    <ligand>
        <name>Mg(2+)</name>
        <dbReference type="ChEBI" id="CHEBI:18420"/>
    </ligand>
</feature>
<feature type="binding site" description="in other chain" evidence="1">
    <location>
        <begin position="38"/>
        <end position="41"/>
    </location>
    <ligand>
        <name>IMP</name>
        <dbReference type="ChEBI" id="CHEBI:58053"/>
        <note>ligand shared between dimeric partners</note>
    </ligand>
</feature>
<feature type="binding site" evidence="1">
    <location>
        <begin position="40"/>
        <end position="42"/>
    </location>
    <ligand>
        <name>GTP</name>
        <dbReference type="ChEBI" id="CHEBI:37565"/>
    </ligand>
</feature>
<feature type="binding site" evidence="1">
    <location>
        <position position="40"/>
    </location>
    <ligand>
        <name>Mg(2+)</name>
        <dbReference type="ChEBI" id="CHEBI:18420"/>
    </ligand>
</feature>
<feature type="binding site" description="in other chain" evidence="1">
    <location>
        <position position="130"/>
    </location>
    <ligand>
        <name>IMP</name>
        <dbReference type="ChEBI" id="CHEBI:58053"/>
        <note>ligand shared between dimeric partners</note>
    </ligand>
</feature>
<feature type="binding site" evidence="1">
    <location>
        <position position="144"/>
    </location>
    <ligand>
        <name>IMP</name>
        <dbReference type="ChEBI" id="CHEBI:58053"/>
        <note>ligand shared between dimeric partners</note>
    </ligand>
</feature>
<feature type="binding site" description="in other chain" evidence="1">
    <location>
        <position position="226"/>
    </location>
    <ligand>
        <name>IMP</name>
        <dbReference type="ChEBI" id="CHEBI:58053"/>
        <note>ligand shared between dimeric partners</note>
    </ligand>
</feature>
<feature type="binding site" description="in other chain" evidence="1">
    <location>
        <position position="241"/>
    </location>
    <ligand>
        <name>IMP</name>
        <dbReference type="ChEBI" id="CHEBI:58053"/>
        <note>ligand shared between dimeric partners</note>
    </ligand>
</feature>
<feature type="binding site" evidence="1">
    <location>
        <begin position="301"/>
        <end position="307"/>
    </location>
    <ligand>
        <name>substrate</name>
    </ligand>
</feature>
<feature type="binding site" description="in other chain" evidence="1">
    <location>
        <position position="305"/>
    </location>
    <ligand>
        <name>IMP</name>
        <dbReference type="ChEBI" id="CHEBI:58053"/>
        <note>ligand shared between dimeric partners</note>
    </ligand>
</feature>
<feature type="binding site" evidence="1">
    <location>
        <position position="307"/>
    </location>
    <ligand>
        <name>GTP</name>
        <dbReference type="ChEBI" id="CHEBI:37565"/>
    </ligand>
</feature>
<feature type="binding site" evidence="1">
    <location>
        <begin position="333"/>
        <end position="335"/>
    </location>
    <ligand>
        <name>GTP</name>
        <dbReference type="ChEBI" id="CHEBI:37565"/>
    </ligand>
</feature>
<feature type="binding site" evidence="1">
    <location>
        <begin position="415"/>
        <end position="417"/>
    </location>
    <ligand>
        <name>GTP</name>
        <dbReference type="ChEBI" id="CHEBI:37565"/>
    </ligand>
</feature>
<accession>Q6MN06</accession>
<proteinExistence type="inferred from homology"/>
<comment type="function">
    <text evidence="1">Plays an important role in the de novo pathway of purine nucleotide biosynthesis. Catalyzes the first committed step in the biosynthesis of AMP from IMP.</text>
</comment>
<comment type="catalytic activity">
    <reaction evidence="1">
        <text>IMP + L-aspartate + GTP = N(6)-(1,2-dicarboxyethyl)-AMP + GDP + phosphate + 2 H(+)</text>
        <dbReference type="Rhea" id="RHEA:15753"/>
        <dbReference type="ChEBI" id="CHEBI:15378"/>
        <dbReference type="ChEBI" id="CHEBI:29991"/>
        <dbReference type="ChEBI" id="CHEBI:37565"/>
        <dbReference type="ChEBI" id="CHEBI:43474"/>
        <dbReference type="ChEBI" id="CHEBI:57567"/>
        <dbReference type="ChEBI" id="CHEBI:58053"/>
        <dbReference type="ChEBI" id="CHEBI:58189"/>
        <dbReference type="EC" id="6.3.4.4"/>
    </reaction>
</comment>
<comment type="cofactor">
    <cofactor evidence="1">
        <name>Mg(2+)</name>
        <dbReference type="ChEBI" id="CHEBI:18420"/>
    </cofactor>
    <text evidence="1">Binds 1 Mg(2+) ion per subunit.</text>
</comment>
<comment type="pathway">
    <text evidence="1">Purine metabolism; AMP biosynthesis via de novo pathway; AMP from IMP: step 1/2.</text>
</comment>
<comment type="subunit">
    <text evidence="1">Homodimer.</text>
</comment>
<comment type="subcellular location">
    <subcellularLocation>
        <location evidence="1">Cytoplasm</location>
    </subcellularLocation>
</comment>
<comment type="similarity">
    <text evidence="1">Belongs to the adenylosuccinate synthetase family.</text>
</comment>
<name>PURA_BDEBA</name>
<organism>
    <name type="scientific">Bdellovibrio bacteriovorus (strain ATCC 15356 / DSM 50701 / NCIMB 9529 / HD100)</name>
    <dbReference type="NCBI Taxonomy" id="264462"/>
    <lineage>
        <taxon>Bacteria</taxon>
        <taxon>Pseudomonadati</taxon>
        <taxon>Bdellovibrionota</taxon>
        <taxon>Bdellovibrionia</taxon>
        <taxon>Bdellovibrionales</taxon>
        <taxon>Pseudobdellovibrionaceae</taxon>
        <taxon>Bdellovibrio</taxon>
    </lineage>
</organism>
<evidence type="ECO:0000255" key="1">
    <source>
        <dbReference type="HAMAP-Rule" id="MF_00011"/>
    </source>
</evidence>
<dbReference type="EC" id="6.3.4.4" evidence="1"/>
<dbReference type="EMBL" id="BX842649">
    <property type="protein sequence ID" value="CAE79346.1"/>
    <property type="molecule type" value="Genomic_DNA"/>
</dbReference>
<dbReference type="RefSeq" id="WP_011163948.1">
    <property type="nucleotide sequence ID" value="NC_005363.1"/>
</dbReference>
<dbReference type="SMR" id="Q6MN06"/>
<dbReference type="STRING" id="264462.Bd1460"/>
<dbReference type="GeneID" id="93012466"/>
<dbReference type="KEGG" id="bba:Bd1460"/>
<dbReference type="eggNOG" id="COG0104">
    <property type="taxonomic scope" value="Bacteria"/>
</dbReference>
<dbReference type="HOGENOM" id="CLU_029848_0_0_7"/>
<dbReference type="UniPathway" id="UPA00075">
    <property type="reaction ID" value="UER00335"/>
</dbReference>
<dbReference type="Proteomes" id="UP000008080">
    <property type="component" value="Chromosome"/>
</dbReference>
<dbReference type="GO" id="GO:0005737">
    <property type="term" value="C:cytoplasm"/>
    <property type="evidence" value="ECO:0007669"/>
    <property type="project" value="UniProtKB-SubCell"/>
</dbReference>
<dbReference type="GO" id="GO:0004019">
    <property type="term" value="F:adenylosuccinate synthase activity"/>
    <property type="evidence" value="ECO:0007669"/>
    <property type="project" value="UniProtKB-UniRule"/>
</dbReference>
<dbReference type="GO" id="GO:0005525">
    <property type="term" value="F:GTP binding"/>
    <property type="evidence" value="ECO:0007669"/>
    <property type="project" value="UniProtKB-UniRule"/>
</dbReference>
<dbReference type="GO" id="GO:0000287">
    <property type="term" value="F:magnesium ion binding"/>
    <property type="evidence" value="ECO:0007669"/>
    <property type="project" value="UniProtKB-UniRule"/>
</dbReference>
<dbReference type="GO" id="GO:0044208">
    <property type="term" value="P:'de novo' AMP biosynthetic process"/>
    <property type="evidence" value="ECO:0007669"/>
    <property type="project" value="UniProtKB-UniRule"/>
</dbReference>
<dbReference type="GO" id="GO:0046040">
    <property type="term" value="P:IMP metabolic process"/>
    <property type="evidence" value="ECO:0007669"/>
    <property type="project" value="TreeGrafter"/>
</dbReference>
<dbReference type="CDD" id="cd03108">
    <property type="entry name" value="AdSS"/>
    <property type="match status" value="1"/>
</dbReference>
<dbReference type="FunFam" id="1.10.300.10:FF:000001">
    <property type="entry name" value="Adenylosuccinate synthetase"/>
    <property type="match status" value="1"/>
</dbReference>
<dbReference type="FunFam" id="3.90.170.10:FF:000001">
    <property type="entry name" value="Adenylosuccinate synthetase"/>
    <property type="match status" value="1"/>
</dbReference>
<dbReference type="Gene3D" id="3.40.440.10">
    <property type="entry name" value="Adenylosuccinate Synthetase, subunit A, domain 1"/>
    <property type="match status" value="1"/>
</dbReference>
<dbReference type="Gene3D" id="1.10.300.10">
    <property type="entry name" value="Adenylosuccinate Synthetase, subunit A, domain 2"/>
    <property type="match status" value="1"/>
</dbReference>
<dbReference type="Gene3D" id="3.90.170.10">
    <property type="entry name" value="Adenylosuccinate Synthetase, subunit A, domain 3"/>
    <property type="match status" value="1"/>
</dbReference>
<dbReference type="HAMAP" id="MF_00011">
    <property type="entry name" value="Adenylosucc_synth"/>
    <property type="match status" value="1"/>
</dbReference>
<dbReference type="InterPro" id="IPR018220">
    <property type="entry name" value="Adenylosuccin_syn_GTP-bd"/>
</dbReference>
<dbReference type="InterPro" id="IPR042109">
    <property type="entry name" value="Adenylosuccinate_synth_dom1"/>
</dbReference>
<dbReference type="InterPro" id="IPR042110">
    <property type="entry name" value="Adenylosuccinate_synth_dom2"/>
</dbReference>
<dbReference type="InterPro" id="IPR042111">
    <property type="entry name" value="Adenylosuccinate_synth_dom3"/>
</dbReference>
<dbReference type="InterPro" id="IPR001114">
    <property type="entry name" value="Adenylosuccinate_synthetase"/>
</dbReference>
<dbReference type="InterPro" id="IPR027417">
    <property type="entry name" value="P-loop_NTPase"/>
</dbReference>
<dbReference type="NCBIfam" id="NF002223">
    <property type="entry name" value="PRK01117.1"/>
    <property type="match status" value="1"/>
</dbReference>
<dbReference type="NCBIfam" id="TIGR00184">
    <property type="entry name" value="purA"/>
    <property type="match status" value="1"/>
</dbReference>
<dbReference type="PANTHER" id="PTHR11846">
    <property type="entry name" value="ADENYLOSUCCINATE SYNTHETASE"/>
    <property type="match status" value="1"/>
</dbReference>
<dbReference type="PANTHER" id="PTHR11846:SF0">
    <property type="entry name" value="ADENYLOSUCCINATE SYNTHETASE"/>
    <property type="match status" value="1"/>
</dbReference>
<dbReference type="Pfam" id="PF00709">
    <property type="entry name" value="Adenylsucc_synt"/>
    <property type="match status" value="1"/>
</dbReference>
<dbReference type="SMART" id="SM00788">
    <property type="entry name" value="Adenylsucc_synt"/>
    <property type="match status" value="1"/>
</dbReference>
<dbReference type="SUPFAM" id="SSF52540">
    <property type="entry name" value="P-loop containing nucleoside triphosphate hydrolases"/>
    <property type="match status" value="1"/>
</dbReference>
<dbReference type="PROSITE" id="PS01266">
    <property type="entry name" value="ADENYLOSUCCIN_SYN_1"/>
    <property type="match status" value="1"/>
</dbReference>